<proteinExistence type="inferred from homology"/>
<dbReference type="EC" id="2.7.4.22" evidence="1"/>
<dbReference type="EMBL" id="CP000386">
    <property type="protein sequence ID" value="ABG04362.1"/>
    <property type="molecule type" value="Genomic_DNA"/>
</dbReference>
<dbReference type="RefSeq" id="WP_011564379.1">
    <property type="nucleotide sequence ID" value="NC_008148.1"/>
</dbReference>
<dbReference type="SMR" id="Q1AW66"/>
<dbReference type="STRING" id="266117.Rxyl_1400"/>
<dbReference type="KEGG" id="rxy:Rxyl_1400"/>
<dbReference type="eggNOG" id="COG0528">
    <property type="taxonomic scope" value="Bacteria"/>
</dbReference>
<dbReference type="HOGENOM" id="CLU_033861_0_0_11"/>
<dbReference type="OrthoDB" id="9807458at2"/>
<dbReference type="PhylomeDB" id="Q1AW66"/>
<dbReference type="UniPathway" id="UPA00159">
    <property type="reaction ID" value="UER00275"/>
</dbReference>
<dbReference type="Proteomes" id="UP000006637">
    <property type="component" value="Chromosome"/>
</dbReference>
<dbReference type="GO" id="GO:0005737">
    <property type="term" value="C:cytoplasm"/>
    <property type="evidence" value="ECO:0007669"/>
    <property type="project" value="UniProtKB-SubCell"/>
</dbReference>
<dbReference type="GO" id="GO:0005524">
    <property type="term" value="F:ATP binding"/>
    <property type="evidence" value="ECO:0007669"/>
    <property type="project" value="UniProtKB-KW"/>
</dbReference>
<dbReference type="GO" id="GO:0033862">
    <property type="term" value="F:UMP kinase activity"/>
    <property type="evidence" value="ECO:0007669"/>
    <property type="project" value="UniProtKB-EC"/>
</dbReference>
<dbReference type="GO" id="GO:0044210">
    <property type="term" value="P:'de novo' CTP biosynthetic process"/>
    <property type="evidence" value="ECO:0007669"/>
    <property type="project" value="UniProtKB-UniRule"/>
</dbReference>
<dbReference type="GO" id="GO:0006225">
    <property type="term" value="P:UDP biosynthetic process"/>
    <property type="evidence" value="ECO:0007669"/>
    <property type="project" value="TreeGrafter"/>
</dbReference>
<dbReference type="CDD" id="cd04254">
    <property type="entry name" value="AAK_UMPK-PyrH-Ec"/>
    <property type="match status" value="1"/>
</dbReference>
<dbReference type="FunFam" id="3.40.1160.10:FF:000001">
    <property type="entry name" value="Uridylate kinase"/>
    <property type="match status" value="1"/>
</dbReference>
<dbReference type="Gene3D" id="3.40.1160.10">
    <property type="entry name" value="Acetylglutamate kinase-like"/>
    <property type="match status" value="1"/>
</dbReference>
<dbReference type="HAMAP" id="MF_01220_B">
    <property type="entry name" value="PyrH_B"/>
    <property type="match status" value="1"/>
</dbReference>
<dbReference type="InterPro" id="IPR036393">
    <property type="entry name" value="AceGlu_kinase-like_sf"/>
</dbReference>
<dbReference type="InterPro" id="IPR001048">
    <property type="entry name" value="Asp/Glu/Uridylate_kinase"/>
</dbReference>
<dbReference type="InterPro" id="IPR011817">
    <property type="entry name" value="Uridylate_kinase"/>
</dbReference>
<dbReference type="InterPro" id="IPR015963">
    <property type="entry name" value="Uridylate_kinase_bac"/>
</dbReference>
<dbReference type="NCBIfam" id="TIGR02075">
    <property type="entry name" value="pyrH_bact"/>
    <property type="match status" value="1"/>
</dbReference>
<dbReference type="PANTHER" id="PTHR42833">
    <property type="entry name" value="URIDYLATE KINASE"/>
    <property type="match status" value="1"/>
</dbReference>
<dbReference type="PANTHER" id="PTHR42833:SF4">
    <property type="entry name" value="URIDYLATE KINASE PUMPKIN, CHLOROPLASTIC"/>
    <property type="match status" value="1"/>
</dbReference>
<dbReference type="Pfam" id="PF00696">
    <property type="entry name" value="AA_kinase"/>
    <property type="match status" value="1"/>
</dbReference>
<dbReference type="PIRSF" id="PIRSF005650">
    <property type="entry name" value="Uridylate_kin"/>
    <property type="match status" value="1"/>
</dbReference>
<dbReference type="SUPFAM" id="SSF53633">
    <property type="entry name" value="Carbamate kinase-like"/>
    <property type="match status" value="1"/>
</dbReference>
<accession>Q1AW66</accession>
<sequence>MGESARAAETSELGPLRRVVLKLSGESLAGNGGYGIDPGSLEVSVEQVLEAVEAGAELAIVVGGGNIFRGAQVADELGIESATADYMSMLGTVINALALQAALERRGVPTRVQSAIEIKEVAEPYIRRRAIRHLEKGRVVIFASGTGNPFFTTDTGAALRALEINADALLMAKNRVDGIYDKDPRVHGDARIVPRLDYMELLSRNLAVMDHTAATLCSGEGLPIIVFDILKSGNLRRILQGEKVGSLVWREPPER</sequence>
<feature type="chain" id="PRO_0000323946" description="Uridylate kinase">
    <location>
        <begin position="1"/>
        <end position="255"/>
    </location>
</feature>
<feature type="region of interest" description="Involved in allosteric activation by GTP" evidence="1">
    <location>
        <begin position="30"/>
        <end position="35"/>
    </location>
</feature>
<feature type="binding site" evidence="1">
    <location>
        <begin position="22"/>
        <end position="25"/>
    </location>
    <ligand>
        <name>ATP</name>
        <dbReference type="ChEBI" id="CHEBI:30616"/>
    </ligand>
</feature>
<feature type="binding site" evidence="1">
    <location>
        <position position="64"/>
    </location>
    <ligand>
        <name>UMP</name>
        <dbReference type="ChEBI" id="CHEBI:57865"/>
    </ligand>
</feature>
<feature type="binding site" evidence="1">
    <location>
        <position position="65"/>
    </location>
    <ligand>
        <name>ATP</name>
        <dbReference type="ChEBI" id="CHEBI:30616"/>
    </ligand>
</feature>
<feature type="binding site" evidence="1">
    <location>
        <position position="69"/>
    </location>
    <ligand>
        <name>ATP</name>
        <dbReference type="ChEBI" id="CHEBI:30616"/>
    </ligand>
</feature>
<feature type="binding site" evidence="1">
    <location>
        <position position="85"/>
    </location>
    <ligand>
        <name>UMP</name>
        <dbReference type="ChEBI" id="CHEBI:57865"/>
    </ligand>
</feature>
<feature type="binding site" evidence="1">
    <location>
        <begin position="146"/>
        <end position="153"/>
    </location>
    <ligand>
        <name>UMP</name>
        <dbReference type="ChEBI" id="CHEBI:57865"/>
    </ligand>
</feature>
<feature type="binding site" evidence="1">
    <location>
        <position position="174"/>
    </location>
    <ligand>
        <name>ATP</name>
        <dbReference type="ChEBI" id="CHEBI:30616"/>
    </ligand>
</feature>
<feature type="binding site" evidence="1">
    <location>
        <position position="180"/>
    </location>
    <ligand>
        <name>ATP</name>
        <dbReference type="ChEBI" id="CHEBI:30616"/>
    </ligand>
</feature>
<feature type="binding site" evidence="1">
    <location>
        <position position="183"/>
    </location>
    <ligand>
        <name>ATP</name>
        <dbReference type="ChEBI" id="CHEBI:30616"/>
    </ligand>
</feature>
<reference key="1">
    <citation type="submission" date="2006-06" db="EMBL/GenBank/DDBJ databases">
        <title>Complete sequence of Rubrobacter xylanophilus DSM 9941.</title>
        <authorList>
            <consortium name="US DOE Joint Genome Institute"/>
            <person name="Copeland A."/>
            <person name="Lucas S."/>
            <person name="Lapidus A."/>
            <person name="Barry K."/>
            <person name="Detter J.C."/>
            <person name="Glavina del Rio T."/>
            <person name="Hammon N."/>
            <person name="Israni S."/>
            <person name="Dalin E."/>
            <person name="Tice H."/>
            <person name="Pitluck S."/>
            <person name="Munk A.C."/>
            <person name="Brettin T."/>
            <person name="Bruce D."/>
            <person name="Han C."/>
            <person name="Tapia R."/>
            <person name="Gilna P."/>
            <person name="Schmutz J."/>
            <person name="Larimer F."/>
            <person name="Land M."/>
            <person name="Hauser L."/>
            <person name="Kyrpides N."/>
            <person name="Lykidis A."/>
            <person name="da Costa M.S."/>
            <person name="Rainey F.A."/>
            <person name="Empadinhas N."/>
            <person name="Jolivet E."/>
            <person name="Battista J.R."/>
            <person name="Richardson P."/>
        </authorList>
    </citation>
    <scope>NUCLEOTIDE SEQUENCE [LARGE SCALE GENOMIC DNA]</scope>
    <source>
        <strain>DSM 9941 / JCM 11954 / NBRC 16129 / PRD-1</strain>
    </source>
</reference>
<protein>
    <recommendedName>
        <fullName evidence="1">Uridylate kinase</fullName>
        <shortName evidence="1">UK</shortName>
        <ecNumber evidence="1">2.7.4.22</ecNumber>
    </recommendedName>
    <alternativeName>
        <fullName evidence="1">Uridine monophosphate kinase</fullName>
        <shortName evidence="1">UMP kinase</shortName>
        <shortName evidence="1">UMPK</shortName>
    </alternativeName>
</protein>
<evidence type="ECO:0000255" key="1">
    <source>
        <dbReference type="HAMAP-Rule" id="MF_01220"/>
    </source>
</evidence>
<comment type="function">
    <text evidence="1">Catalyzes the reversible phosphorylation of UMP to UDP.</text>
</comment>
<comment type="catalytic activity">
    <reaction evidence="1">
        <text>UMP + ATP = UDP + ADP</text>
        <dbReference type="Rhea" id="RHEA:24400"/>
        <dbReference type="ChEBI" id="CHEBI:30616"/>
        <dbReference type="ChEBI" id="CHEBI:57865"/>
        <dbReference type="ChEBI" id="CHEBI:58223"/>
        <dbReference type="ChEBI" id="CHEBI:456216"/>
        <dbReference type="EC" id="2.7.4.22"/>
    </reaction>
</comment>
<comment type="activity regulation">
    <text evidence="1">Allosterically activated by GTP. Inhibited by UTP.</text>
</comment>
<comment type="pathway">
    <text evidence="1">Pyrimidine metabolism; CTP biosynthesis via de novo pathway; UDP from UMP (UMPK route): step 1/1.</text>
</comment>
<comment type="subunit">
    <text evidence="1">Homohexamer.</text>
</comment>
<comment type="subcellular location">
    <subcellularLocation>
        <location evidence="1">Cytoplasm</location>
    </subcellularLocation>
</comment>
<comment type="similarity">
    <text evidence="1">Belongs to the UMP kinase family.</text>
</comment>
<gene>
    <name evidence="1" type="primary">pyrH</name>
    <name type="ordered locus">Rxyl_1400</name>
</gene>
<organism>
    <name type="scientific">Rubrobacter xylanophilus (strain DSM 9941 / JCM 11954 / NBRC 16129 / PRD-1)</name>
    <dbReference type="NCBI Taxonomy" id="266117"/>
    <lineage>
        <taxon>Bacteria</taxon>
        <taxon>Bacillati</taxon>
        <taxon>Actinomycetota</taxon>
        <taxon>Rubrobacteria</taxon>
        <taxon>Rubrobacterales</taxon>
        <taxon>Rubrobacteraceae</taxon>
        <taxon>Rubrobacter</taxon>
    </lineage>
</organism>
<name>PYRH_RUBXD</name>
<keyword id="KW-0021">Allosteric enzyme</keyword>
<keyword id="KW-0067">ATP-binding</keyword>
<keyword id="KW-0963">Cytoplasm</keyword>
<keyword id="KW-0418">Kinase</keyword>
<keyword id="KW-0547">Nucleotide-binding</keyword>
<keyword id="KW-0665">Pyrimidine biosynthesis</keyword>
<keyword id="KW-1185">Reference proteome</keyword>
<keyword id="KW-0808">Transferase</keyword>